<sequence>MHQQKRQPELVEGNLPVFVFPTELIFYADDQSTHKQVLTLYNPYEFALKFKVLCTTPNKYVVVDAAGAVKPQCCVDIVIRHRDVRSCHYGVIDKFRLQVSEQSQRKALGRKEVVATLLPSAKEQQKEEEEKRLKEHLTESLFFEQSFQPENRAVSSGPSLLTVFLGVVCIAALMLPTLGDVESLVPLYLHLSVNQKLVAAYILGLITMAILRT</sequence>
<comment type="function">
    <text evidence="1">Plays a role in differentiation and/or proliferation of mesenchymal stem cells. Proposed to be involved in epithelial-to-mesenchymal transition (EMT). However, another study suggests that it is not required for EMT or stem cell self-renewal and acts during later stages of differentiation.</text>
</comment>
<comment type="interaction">
    <interactant intactId="EBI-12245642">
        <id>Q9UJG1</id>
    </interactant>
    <interactant intactId="EBI-12118888">
        <id>Q96D05-2</id>
        <label>FAM241B</label>
    </interactant>
    <organismsDiffer>false</organismsDiffer>
    <experiments>3</experiments>
</comment>
<comment type="subcellular location">
    <subcellularLocation>
        <location evidence="1">Endoplasmic reticulum membrane</location>
        <topology evidence="2">Multi-pass membrane protein</topology>
    </subcellularLocation>
    <subcellularLocation>
        <location evidence="1">Golgi apparatus membrane</location>
        <topology evidence="2">Multi-pass membrane protein</topology>
    </subcellularLocation>
</comment>
<comment type="alternative products">
    <event type="alternative splicing"/>
    <isoform>
        <id>Q9UJG1-1</id>
        <name>1</name>
        <sequence type="displayed"/>
    </isoform>
    <isoform>
        <id>Q9UJG1-2</id>
        <name>2</name>
        <sequence type="described" ref="VSP_014044"/>
    </isoform>
    <isoform>
        <id>Q9UJG1-3</id>
        <name>3</name>
        <sequence type="described" ref="VSP_014043"/>
    </isoform>
</comment>
<comment type="developmental stage">
    <text evidence="5">Has low expression in pericytes and adventitial vascular cells (ASC) derived from adipose tissue. Highly expressed in differentiating mesenchymal stem cells derived from pericytes and ASC.</text>
</comment>
<gene>
    <name type="primary">MOSPD1</name>
</gene>
<reference key="1">
    <citation type="submission" date="2000-01" db="EMBL/GenBank/DDBJ databases">
        <title>Novel human gene mapping to chromosome X.</title>
        <authorList>
            <person name="Rhodes S."/>
            <person name="Huckle E."/>
        </authorList>
    </citation>
    <scope>NUCLEOTIDE SEQUENCE [LARGE SCALE MRNA] (ISOFORM 1)</scope>
</reference>
<reference key="2">
    <citation type="journal article" date="2004" name="Nat. Genet.">
        <title>Complete sequencing and characterization of 21,243 full-length human cDNAs.</title>
        <authorList>
            <person name="Ota T."/>
            <person name="Suzuki Y."/>
            <person name="Nishikawa T."/>
            <person name="Otsuki T."/>
            <person name="Sugiyama T."/>
            <person name="Irie R."/>
            <person name="Wakamatsu A."/>
            <person name="Hayashi K."/>
            <person name="Sato H."/>
            <person name="Nagai K."/>
            <person name="Kimura K."/>
            <person name="Makita H."/>
            <person name="Sekine M."/>
            <person name="Obayashi M."/>
            <person name="Nishi T."/>
            <person name="Shibahara T."/>
            <person name="Tanaka T."/>
            <person name="Ishii S."/>
            <person name="Yamamoto J."/>
            <person name="Saito K."/>
            <person name="Kawai Y."/>
            <person name="Isono Y."/>
            <person name="Nakamura Y."/>
            <person name="Nagahari K."/>
            <person name="Murakami K."/>
            <person name="Yasuda T."/>
            <person name="Iwayanagi T."/>
            <person name="Wagatsuma M."/>
            <person name="Shiratori A."/>
            <person name="Sudo H."/>
            <person name="Hosoiri T."/>
            <person name="Kaku Y."/>
            <person name="Kodaira H."/>
            <person name="Kondo H."/>
            <person name="Sugawara M."/>
            <person name="Takahashi M."/>
            <person name="Kanda K."/>
            <person name="Yokoi T."/>
            <person name="Furuya T."/>
            <person name="Kikkawa E."/>
            <person name="Omura Y."/>
            <person name="Abe K."/>
            <person name="Kamihara K."/>
            <person name="Katsuta N."/>
            <person name="Sato K."/>
            <person name="Tanikawa M."/>
            <person name="Yamazaki M."/>
            <person name="Ninomiya K."/>
            <person name="Ishibashi T."/>
            <person name="Yamashita H."/>
            <person name="Murakawa K."/>
            <person name="Fujimori K."/>
            <person name="Tanai H."/>
            <person name="Kimata M."/>
            <person name="Watanabe M."/>
            <person name="Hiraoka S."/>
            <person name="Chiba Y."/>
            <person name="Ishida S."/>
            <person name="Ono Y."/>
            <person name="Takiguchi S."/>
            <person name="Watanabe S."/>
            <person name="Yosida M."/>
            <person name="Hotuta T."/>
            <person name="Kusano J."/>
            <person name="Kanehori K."/>
            <person name="Takahashi-Fujii A."/>
            <person name="Hara H."/>
            <person name="Tanase T.-O."/>
            <person name="Nomura Y."/>
            <person name="Togiya S."/>
            <person name="Komai F."/>
            <person name="Hara R."/>
            <person name="Takeuchi K."/>
            <person name="Arita M."/>
            <person name="Imose N."/>
            <person name="Musashino K."/>
            <person name="Yuuki H."/>
            <person name="Oshima A."/>
            <person name="Sasaki N."/>
            <person name="Aotsuka S."/>
            <person name="Yoshikawa Y."/>
            <person name="Matsunawa H."/>
            <person name="Ichihara T."/>
            <person name="Shiohata N."/>
            <person name="Sano S."/>
            <person name="Moriya S."/>
            <person name="Momiyama H."/>
            <person name="Satoh N."/>
            <person name="Takami S."/>
            <person name="Terashima Y."/>
            <person name="Suzuki O."/>
            <person name="Nakagawa S."/>
            <person name="Senoh A."/>
            <person name="Mizoguchi H."/>
            <person name="Goto Y."/>
            <person name="Shimizu F."/>
            <person name="Wakebe H."/>
            <person name="Hishigaki H."/>
            <person name="Watanabe T."/>
            <person name="Sugiyama A."/>
            <person name="Takemoto M."/>
            <person name="Kawakami B."/>
            <person name="Yamazaki M."/>
            <person name="Watanabe K."/>
            <person name="Kumagai A."/>
            <person name="Itakura S."/>
            <person name="Fukuzumi Y."/>
            <person name="Fujimori Y."/>
            <person name="Komiyama M."/>
            <person name="Tashiro H."/>
            <person name="Tanigami A."/>
            <person name="Fujiwara T."/>
            <person name="Ono T."/>
            <person name="Yamada K."/>
            <person name="Fujii Y."/>
            <person name="Ozaki K."/>
            <person name="Hirao M."/>
            <person name="Ohmori Y."/>
            <person name="Kawabata A."/>
            <person name="Hikiji T."/>
            <person name="Kobatake N."/>
            <person name="Inagaki H."/>
            <person name="Ikema Y."/>
            <person name="Okamoto S."/>
            <person name="Okitani R."/>
            <person name="Kawakami T."/>
            <person name="Noguchi S."/>
            <person name="Itoh T."/>
            <person name="Shigeta K."/>
            <person name="Senba T."/>
            <person name="Matsumura K."/>
            <person name="Nakajima Y."/>
            <person name="Mizuno T."/>
            <person name="Morinaga M."/>
            <person name="Sasaki M."/>
            <person name="Togashi T."/>
            <person name="Oyama M."/>
            <person name="Hata H."/>
            <person name="Watanabe M."/>
            <person name="Komatsu T."/>
            <person name="Mizushima-Sugano J."/>
            <person name="Satoh T."/>
            <person name="Shirai Y."/>
            <person name="Takahashi Y."/>
            <person name="Nakagawa K."/>
            <person name="Okumura K."/>
            <person name="Nagase T."/>
            <person name="Nomura N."/>
            <person name="Kikuchi H."/>
            <person name="Masuho Y."/>
            <person name="Yamashita R."/>
            <person name="Nakai K."/>
            <person name="Yada T."/>
            <person name="Nakamura Y."/>
            <person name="Ohara O."/>
            <person name="Isogai T."/>
            <person name="Sugano S."/>
        </authorList>
    </citation>
    <scope>NUCLEOTIDE SEQUENCE [LARGE SCALE MRNA] (ISOFORM 1)</scope>
    <source>
        <tissue>Brain</tissue>
    </source>
</reference>
<reference key="3">
    <citation type="journal article" date="2005" name="Nature">
        <title>The DNA sequence of the human X chromosome.</title>
        <authorList>
            <person name="Ross M.T."/>
            <person name="Grafham D.V."/>
            <person name="Coffey A.J."/>
            <person name="Scherer S."/>
            <person name="McLay K."/>
            <person name="Muzny D."/>
            <person name="Platzer M."/>
            <person name="Howell G.R."/>
            <person name="Burrows C."/>
            <person name="Bird C.P."/>
            <person name="Frankish A."/>
            <person name="Lovell F.L."/>
            <person name="Howe K.L."/>
            <person name="Ashurst J.L."/>
            <person name="Fulton R.S."/>
            <person name="Sudbrak R."/>
            <person name="Wen G."/>
            <person name="Jones M.C."/>
            <person name="Hurles M.E."/>
            <person name="Andrews T.D."/>
            <person name="Scott C.E."/>
            <person name="Searle S."/>
            <person name="Ramser J."/>
            <person name="Whittaker A."/>
            <person name="Deadman R."/>
            <person name="Carter N.P."/>
            <person name="Hunt S.E."/>
            <person name="Chen R."/>
            <person name="Cree A."/>
            <person name="Gunaratne P."/>
            <person name="Havlak P."/>
            <person name="Hodgson A."/>
            <person name="Metzker M.L."/>
            <person name="Richards S."/>
            <person name="Scott G."/>
            <person name="Steffen D."/>
            <person name="Sodergren E."/>
            <person name="Wheeler D.A."/>
            <person name="Worley K.C."/>
            <person name="Ainscough R."/>
            <person name="Ambrose K.D."/>
            <person name="Ansari-Lari M.A."/>
            <person name="Aradhya S."/>
            <person name="Ashwell R.I."/>
            <person name="Babbage A.K."/>
            <person name="Bagguley C.L."/>
            <person name="Ballabio A."/>
            <person name="Banerjee R."/>
            <person name="Barker G.E."/>
            <person name="Barlow K.F."/>
            <person name="Barrett I.P."/>
            <person name="Bates K.N."/>
            <person name="Beare D.M."/>
            <person name="Beasley H."/>
            <person name="Beasley O."/>
            <person name="Beck A."/>
            <person name="Bethel G."/>
            <person name="Blechschmidt K."/>
            <person name="Brady N."/>
            <person name="Bray-Allen S."/>
            <person name="Bridgeman A.M."/>
            <person name="Brown A.J."/>
            <person name="Brown M.J."/>
            <person name="Bonnin D."/>
            <person name="Bruford E.A."/>
            <person name="Buhay C."/>
            <person name="Burch P."/>
            <person name="Burford D."/>
            <person name="Burgess J."/>
            <person name="Burrill W."/>
            <person name="Burton J."/>
            <person name="Bye J.M."/>
            <person name="Carder C."/>
            <person name="Carrel L."/>
            <person name="Chako J."/>
            <person name="Chapman J.C."/>
            <person name="Chavez D."/>
            <person name="Chen E."/>
            <person name="Chen G."/>
            <person name="Chen Y."/>
            <person name="Chen Z."/>
            <person name="Chinault C."/>
            <person name="Ciccodicola A."/>
            <person name="Clark S.Y."/>
            <person name="Clarke G."/>
            <person name="Clee C.M."/>
            <person name="Clegg S."/>
            <person name="Clerc-Blankenburg K."/>
            <person name="Clifford K."/>
            <person name="Cobley V."/>
            <person name="Cole C.G."/>
            <person name="Conquer J.S."/>
            <person name="Corby N."/>
            <person name="Connor R.E."/>
            <person name="David R."/>
            <person name="Davies J."/>
            <person name="Davis C."/>
            <person name="Davis J."/>
            <person name="Delgado O."/>
            <person name="Deshazo D."/>
            <person name="Dhami P."/>
            <person name="Ding Y."/>
            <person name="Dinh H."/>
            <person name="Dodsworth S."/>
            <person name="Draper H."/>
            <person name="Dugan-Rocha S."/>
            <person name="Dunham A."/>
            <person name="Dunn M."/>
            <person name="Durbin K.J."/>
            <person name="Dutta I."/>
            <person name="Eades T."/>
            <person name="Ellwood M."/>
            <person name="Emery-Cohen A."/>
            <person name="Errington H."/>
            <person name="Evans K.L."/>
            <person name="Faulkner L."/>
            <person name="Francis F."/>
            <person name="Frankland J."/>
            <person name="Fraser A.E."/>
            <person name="Galgoczy P."/>
            <person name="Gilbert J."/>
            <person name="Gill R."/>
            <person name="Gloeckner G."/>
            <person name="Gregory S.G."/>
            <person name="Gribble S."/>
            <person name="Griffiths C."/>
            <person name="Grocock R."/>
            <person name="Gu Y."/>
            <person name="Gwilliam R."/>
            <person name="Hamilton C."/>
            <person name="Hart E.A."/>
            <person name="Hawes A."/>
            <person name="Heath P.D."/>
            <person name="Heitmann K."/>
            <person name="Hennig S."/>
            <person name="Hernandez J."/>
            <person name="Hinzmann B."/>
            <person name="Ho S."/>
            <person name="Hoffs M."/>
            <person name="Howden P.J."/>
            <person name="Huckle E.J."/>
            <person name="Hume J."/>
            <person name="Hunt P.J."/>
            <person name="Hunt A.R."/>
            <person name="Isherwood J."/>
            <person name="Jacob L."/>
            <person name="Johnson D."/>
            <person name="Jones S."/>
            <person name="de Jong P.J."/>
            <person name="Joseph S.S."/>
            <person name="Keenan S."/>
            <person name="Kelly S."/>
            <person name="Kershaw J.K."/>
            <person name="Khan Z."/>
            <person name="Kioschis P."/>
            <person name="Klages S."/>
            <person name="Knights A.J."/>
            <person name="Kosiura A."/>
            <person name="Kovar-Smith C."/>
            <person name="Laird G.K."/>
            <person name="Langford C."/>
            <person name="Lawlor S."/>
            <person name="Leversha M."/>
            <person name="Lewis L."/>
            <person name="Liu W."/>
            <person name="Lloyd C."/>
            <person name="Lloyd D.M."/>
            <person name="Loulseged H."/>
            <person name="Loveland J.E."/>
            <person name="Lovell J.D."/>
            <person name="Lozado R."/>
            <person name="Lu J."/>
            <person name="Lyne R."/>
            <person name="Ma J."/>
            <person name="Maheshwari M."/>
            <person name="Matthews L.H."/>
            <person name="McDowall J."/>
            <person name="McLaren S."/>
            <person name="McMurray A."/>
            <person name="Meidl P."/>
            <person name="Meitinger T."/>
            <person name="Milne S."/>
            <person name="Miner G."/>
            <person name="Mistry S.L."/>
            <person name="Morgan M."/>
            <person name="Morris S."/>
            <person name="Mueller I."/>
            <person name="Mullikin J.C."/>
            <person name="Nguyen N."/>
            <person name="Nordsiek G."/>
            <person name="Nyakatura G."/>
            <person name="O'dell C.N."/>
            <person name="Okwuonu G."/>
            <person name="Palmer S."/>
            <person name="Pandian R."/>
            <person name="Parker D."/>
            <person name="Parrish J."/>
            <person name="Pasternak S."/>
            <person name="Patel D."/>
            <person name="Pearce A.V."/>
            <person name="Pearson D.M."/>
            <person name="Pelan S.E."/>
            <person name="Perez L."/>
            <person name="Porter K.M."/>
            <person name="Ramsey Y."/>
            <person name="Reichwald K."/>
            <person name="Rhodes S."/>
            <person name="Ridler K.A."/>
            <person name="Schlessinger D."/>
            <person name="Schueler M.G."/>
            <person name="Sehra H.K."/>
            <person name="Shaw-Smith C."/>
            <person name="Shen H."/>
            <person name="Sheridan E.M."/>
            <person name="Shownkeen R."/>
            <person name="Skuce C.D."/>
            <person name="Smith M.L."/>
            <person name="Sotheran E.C."/>
            <person name="Steingruber H.E."/>
            <person name="Steward C.A."/>
            <person name="Storey R."/>
            <person name="Swann R.M."/>
            <person name="Swarbreck D."/>
            <person name="Tabor P.E."/>
            <person name="Taudien S."/>
            <person name="Taylor T."/>
            <person name="Teague B."/>
            <person name="Thomas K."/>
            <person name="Thorpe A."/>
            <person name="Timms K."/>
            <person name="Tracey A."/>
            <person name="Trevanion S."/>
            <person name="Tromans A.C."/>
            <person name="d'Urso M."/>
            <person name="Verduzco D."/>
            <person name="Villasana D."/>
            <person name="Waldron L."/>
            <person name="Wall M."/>
            <person name="Wang Q."/>
            <person name="Warren J."/>
            <person name="Warry G.L."/>
            <person name="Wei X."/>
            <person name="West A."/>
            <person name="Whitehead S.L."/>
            <person name="Whiteley M.N."/>
            <person name="Wilkinson J.E."/>
            <person name="Willey D.L."/>
            <person name="Williams G."/>
            <person name="Williams L."/>
            <person name="Williamson A."/>
            <person name="Williamson H."/>
            <person name="Wilming L."/>
            <person name="Woodmansey R.L."/>
            <person name="Wray P.W."/>
            <person name="Yen J."/>
            <person name="Zhang J."/>
            <person name="Zhou J."/>
            <person name="Zoghbi H."/>
            <person name="Zorilla S."/>
            <person name="Buck D."/>
            <person name="Reinhardt R."/>
            <person name="Poustka A."/>
            <person name="Rosenthal A."/>
            <person name="Lehrach H."/>
            <person name="Meindl A."/>
            <person name="Minx P.J."/>
            <person name="Hillier L.W."/>
            <person name="Willard H.F."/>
            <person name="Wilson R.K."/>
            <person name="Waterston R.H."/>
            <person name="Rice C.M."/>
            <person name="Vaudin M."/>
            <person name="Coulson A."/>
            <person name="Nelson D.L."/>
            <person name="Weinstock G."/>
            <person name="Sulston J.E."/>
            <person name="Durbin R.M."/>
            <person name="Hubbard T."/>
            <person name="Gibbs R.A."/>
            <person name="Beck S."/>
            <person name="Rogers J."/>
            <person name="Bentley D.R."/>
        </authorList>
    </citation>
    <scope>NUCLEOTIDE SEQUENCE [LARGE SCALE GENOMIC DNA] (ISOFORMS 2 AND 3)</scope>
</reference>
<reference key="4">
    <citation type="submission" date="2005-09" db="EMBL/GenBank/DDBJ databases">
        <authorList>
            <person name="Mural R.J."/>
            <person name="Istrail S."/>
            <person name="Sutton G.G."/>
            <person name="Florea L."/>
            <person name="Halpern A.L."/>
            <person name="Mobarry C.M."/>
            <person name="Lippert R."/>
            <person name="Walenz B."/>
            <person name="Shatkay H."/>
            <person name="Dew I."/>
            <person name="Miller J.R."/>
            <person name="Flanigan M.J."/>
            <person name="Edwards N.J."/>
            <person name="Bolanos R."/>
            <person name="Fasulo D."/>
            <person name="Halldorsson B.V."/>
            <person name="Hannenhalli S."/>
            <person name="Turner R."/>
            <person name="Yooseph S."/>
            <person name="Lu F."/>
            <person name="Nusskern D.R."/>
            <person name="Shue B.C."/>
            <person name="Zheng X.H."/>
            <person name="Zhong F."/>
            <person name="Delcher A.L."/>
            <person name="Huson D.H."/>
            <person name="Kravitz S.A."/>
            <person name="Mouchard L."/>
            <person name="Reinert K."/>
            <person name="Remington K.A."/>
            <person name="Clark A.G."/>
            <person name="Waterman M.S."/>
            <person name="Eichler E.E."/>
            <person name="Adams M.D."/>
            <person name="Hunkapiller M.W."/>
            <person name="Myers E.W."/>
            <person name="Venter J.C."/>
        </authorList>
    </citation>
    <scope>NUCLEOTIDE SEQUENCE [LARGE SCALE GENOMIC DNA]</scope>
</reference>
<reference key="5">
    <citation type="journal article" date="2004" name="Genome Res.">
        <title>The status, quality, and expansion of the NIH full-length cDNA project: the Mammalian Gene Collection (MGC).</title>
        <authorList>
            <consortium name="The MGC Project Team"/>
        </authorList>
    </citation>
    <scope>NUCLEOTIDE SEQUENCE [LARGE SCALE MRNA] (ISOFORM 1)</scope>
    <source>
        <tissue>Placenta</tissue>
    </source>
</reference>
<reference key="6">
    <citation type="journal article" date="2006" name="Science">
        <title>The consensus coding sequences of human breast and colorectal cancers.</title>
        <authorList>
            <person name="Sjoeblom T."/>
            <person name="Jones S."/>
            <person name="Wood L.D."/>
            <person name="Parsons D.W."/>
            <person name="Lin J."/>
            <person name="Barber T.D."/>
            <person name="Mandelker D."/>
            <person name="Leary R.J."/>
            <person name="Ptak J."/>
            <person name="Silliman N."/>
            <person name="Szabo S."/>
            <person name="Buckhaults P."/>
            <person name="Farrell C."/>
            <person name="Meeh P."/>
            <person name="Markowitz S.D."/>
            <person name="Willis J."/>
            <person name="Dawson D."/>
            <person name="Willson J.K.V."/>
            <person name="Gazdar A.F."/>
            <person name="Hartigan J."/>
            <person name="Wu L."/>
            <person name="Liu C."/>
            <person name="Parmigiani G."/>
            <person name="Park B.H."/>
            <person name="Bachman K.E."/>
            <person name="Papadopoulos N."/>
            <person name="Vogelstein B."/>
            <person name="Kinzler K.W."/>
            <person name="Velculescu V.E."/>
        </authorList>
    </citation>
    <scope>VARIANT [LARGE SCALE ANALYSIS] ILE-63</scope>
</reference>
<reference key="7">
    <citation type="journal article" date="2015" name="Stem Cells">
        <title>A role for MOSPD1 in mesenchymal stem cell proliferation and differentiation.</title>
        <authorList>
            <person name="Kara M."/>
            <person name="Axton R.A."/>
            <person name="Jackson M."/>
            <person name="Ghaffari S."/>
            <person name="Buerger K."/>
            <person name="Watt A.J."/>
            <person name="Taylor A.H."/>
            <person name="Orr B."/>
            <person name="Hardy W.R."/>
            <person name="Peault B."/>
            <person name="Forrester L.M."/>
        </authorList>
    </citation>
    <scope>DEVELOPMENTAL STAGE</scope>
</reference>
<organism>
    <name type="scientific">Homo sapiens</name>
    <name type="common">Human</name>
    <dbReference type="NCBI Taxonomy" id="9606"/>
    <lineage>
        <taxon>Eukaryota</taxon>
        <taxon>Metazoa</taxon>
        <taxon>Chordata</taxon>
        <taxon>Craniata</taxon>
        <taxon>Vertebrata</taxon>
        <taxon>Euteleostomi</taxon>
        <taxon>Mammalia</taxon>
        <taxon>Eutheria</taxon>
        <taxon>Euarchontoglires</taxon>
        <taxon>Primates</taxon>
        <taxon>Haplorrhini</taxon>
        <taxon>Catarrhini</taxon>
        <taxon>Hominidae</taxon>
        <taxon>Homo</taxon>
    </lineage>
</organism>
<dbReference type="EMBL" id="AL137163">
    <property type="protein sequence ID" value="CAB69662.1"/>
    <property type="molecule type" value="mRNA"/>
</dbReference>
<dbReference type="EMBL" id="AK316570">
    <property type="protein sequence ID" value="BAG38159.1"/>
    <property type="molecule type" value="mRNA"/>
</dbReference>
<dbReference type="EMBL" id="Z83826">
    <property type="status" value="NOT_ANNOTATED_CDS"/>
    <property type="molecule type" value="Genomic_DNA"/>
</dbReference>
<dbReference type="EMBL" id="CH471107">
    <property type="protein sequence ID" value="EAX11743.1"/>
    <property type="molecule type" value="Genomic_DNA"/>
</dbReference>
<dbReference type="EMBL" id="CH471107">
    <property type="protein sequence ID" value="EAX11744.1"/>
    <property type="molecule type" value="Genomic_DNA"/>
</dbReference>
<dbReference type="EMBL" id="BC005700">
    <property type="protein sequence ID" value="AAH05700.1"/>
    <property type="molecule type" value="mRNA"/>
</dbReference>
<dbReference type="CCDS" id="CCDS14645.1">
    <molecule id="Q9UJG1-1"/>
</dbReference>
<dbReference type="CCDS" id="CCDS78507.1">
    <molecule id="Q9UJG1-2"/>
</dbReference>
<dbReference type="RefSeq" id="NP_001293117.1">
    <molecule id="Q9UJG1-2"/>
    <property type="nucleotide sequence ID" value="NM_001306188.2"/>
</dbReference>
<dbReference type="RefSeq" id="NP_062456.1">
    <molecule id="Q9UJG1-1"/>
    <property type="nucleotide sequence ID" value="NM_019556.3"/>
</dbReference>
<dbReference type="RefSeq" id="XP_011529668.1">
    <molecule id="Q9UJG1-1"/>
    <property type="nucleotide sequence ID" value="XM_011531366.3"/>
</dbReference>
<dbReference type="RefSeq" id="XP_016885142.1">
    <molecule id="Q9UJG1-1"/>
    <property type="nucleotide sequence ID" value="XM_017029653.2"/>
</dbReference>
<dbReference type="RefSeq" id="XP_016885143.1">
    <molecule id="Q9UJG1-2"/>
    <property type="nucleotide sequence ID" value="XM_017029654.2"/>
</dbReference>
<dbReference type="RefSeq" id="XP_047298214.1">
    <molecule id="Q9UJG1-2"/>
    <property type="nucleotide sequence ID" value="XM_047442258.1"/>
</dbReference>
<dbReference type="RefSeq" id="XP_054183383.1">
    <molecule id="Q9UJG1-1"/>
    <property type="nucleotide sequence ID" value="XM_054327408.1"/>
</dbReference>
<dbReference type="RefSeq" id="XP_054183384.1">
    <molecule id="Q9UJG1-1"/>
    <property type="nucleotide sequence ID" value="XM_054327409.1"/>
</dbReference>
<dbReference type="RefSeq" id="XP_054183385.1">
    <molecule id="Q9UJG1-2"/>
    <property type="nucleotide sequence ID" value="XM_054327410.1"/>
</dbReference>
<dbReference type="RefSeq" id="XP_054183386.1">
    <molecule id="Q9UJG1-2"/>
    <property type="nucleotide sequence ID" value="XM_054327411.1"/>
</dbReference>
<dbReference type="SMR" id="Q9UJG1"/>
<dbReference type="BioGRID" id="121105">
    <property type="interactions" value="7"/>
</dbReference>
<dbReference type="FunCoup" id="Q9UJG1">
    <property type="interactions" value="1951"/>
</dbReference>
<dbReference type="IntAct" id="Q9UJG1">
    <property type="interactions" value="3"/>
</dbReference>
<dbReference type="STRING" id="9606.ENSP00000359819"/>
<dbReference type="iPTMnet" id="Q9UJG1"/>
<dbReference type="PhosphoSitePlus" id="Q9UJG1"/>
<dbReference type="BioMuta" id="MOSPD1"/>
<dbReference type="DMDM" id="67461085"/>
<dbReference type="jPOST" id="Q9UJG1"/>
<dbReference type="MassIVE" id="Q9UJG1"/>
<dbReference type="PaxDb" id="9606-ENSP00000359819"/>
<dbReference type="PeptideAtlas" id="Q9UJG1"/>
<dbReference type="ProteomicsDB" id="84622">
    <molecule id="Q9UJG1-1"/>
</dbReference>
<dbReference type="ProteomicsDB" id="84623">
    <molecule id="Q9UJG1-2"/>
</dbReference>
<dbReference type="ProteomicsDB" id="84624">
    <molecule id="Q9UJG1-3"/>
</dbReference>
<dbReference type="Pumba" id="Q9UJG1"/>
<dbReference type="TopDownProteomics" id="Q9UJG1-1">
    <molecule id="Q9UJG1-1"/>
</dbReference>
<dbReference type="TopDownProteomics" id="Q9UJG1-2">
    <molecule id="Q9UJG1-2"/>
</dbReference>
<dbReference type="Antibodypedia" id="30323">
    <property type="antibodies" value="44 antibodies from 17 providers"/>
</dbReference>
<dbReference type="DNASU" id="56180"/>
<dbReference type="Ensembl" id="ENST00000370777.1">
    <molecule id="Q9UJG1-3"/>
    <property type="protein sequence ID" value="ENSP00000359813.1"/>
    <property type="gene ID" value="ENSG00000101928.13"/>
</dbReference>
<dbReference type="Ensembl" id="ENST00000370779.8">
    <molecule id="Q9UJG1-2"/>
    <property type="protein sequence ID" value="ENSP00000359815.4"/>
    <property type="gene ID" value="ENSG00000101928.13"/>
</dbReference>
<dbReference type="Ensembl" id="ENST00000370783.8">
    <molecule id="Q9UJG1-1"/>
    <property type="protein sequence ID" value="ENSP00000359819.3"/>
    <property type="gene ID" value="ENSG00000101928.13"/>
</dbReference>
<dbReference type="GeneID" id="56180"/>
<dbReference type="KEGG" id="hsa:56180"/>
<dbReference type="MANE-Select" id="ENST00000370783.8">
    <property type="protein sequence ID" value="ENSP00000359819.3"/>
    <property type="RefSeq nucleotide sequence ID" value="NM_019556.3"/>
    <property type="RefSeq protein sequence ID" value="NP_062456.1"/>
</dbReference>
<dbReference type="UCSC" id="uc004eyb.4">
    <molecule id="Q9UJG1-1"/>
    <property type="organism name" value="human"/>
</dbReference>
<dbReference type="AGR" id="HGNC:25235"/>
<dbReference type="CTD" id="56180"/>
<dbReference type="DisGeNET" id="56180"/>
<dbReference type="GeneCards" id="MOSPD1"/>
<dbReference type="HGNC" id="HGNC:25235">
    <property type="gene designation" value="MOSPD1"/>
</dbReference>
<dbReference type="HPA" id="ENSG00000101928">
    <property type="expression patterns" value="Low tissue specificity"/>
</dbReference>
<dbReference type="MIM" id="300674">
    <property type="type" value="gene"/>
</dbReference>
<dbReference type="neXtProt" id="NX_Q9UJG1"/>
<dbReference type="OpenTargets" id="ENSG00000101928"/>
<dbReference type="PharmGKB" id="PA134956517"/>
<dbReference type="VEuPathDB" id="HostDB:ENSG00000101928"/>
<dbReference type="eggNOG" id="KOG0439">
    <property type="taxonomic scope" value="Eukaryota"/>
</dbReference>
<dbReference type="GeneTree" id="ENSGT00940000155266"/>
<dbReference type="HOGENOM" id="CLU_088040_0_0_1"/>
<dbReference type="InParanoid" id="Q9UJG1"/>
<dbReference type="OMA" id="VYNPYEF"/>
<dbReference type="OrthoDB" id="10022288at2759"/>
<dbReference type="PAN-GO" id="Q9UJG1">
    <property type="GO annotations" value="1 GO annotation based on evolutionary models"/>
</dbReference>
<dbReference type="PhylomeDB" id="Q9UJG1"/>
<dbReference type="TreeFam" id="TF319778"/>
<dbReference type="PathwayCommons" id="Q9UJG1"/>
<dbReference type="SignaLink" id="Q9UJG1"/>
<dbReference type="BioGRID-ORCS" id="56180">
    <property type="hits" value="13 hits in 783 CRISPR screens"/>
</dbReference>
<dbReference type="ChiTaRS" id="MOSPD1">
    <property type="organism name" value="human"/>
</dbReference>
<dbReference type="GenomeRNAi" id="56180"/>
<dbReference type="Pharos" id="Q9UJG1">
    <property type="development level" value="Tdark"/>
</dbReference>
<dbReference type="PRO" id="PR:Q9UJG1"/>
<dbReference type="Proteomes" id="UP000005640">
    <property type="component" value="Chromosome X"/>
</dbReference>
<dbReference type="RNAct" id="Q9UJG1">
    <property type="molecule type" value="protein"/>
</dbReference>
<dbReference type="Bgee" id="ENSG00000101928">
    <property type="expression patterns" value="Expressed in choroid plexus epithelium and 196 other cell types or tissues"/>
</dbReference>
<dbReference type="GO" id="GO:0005737">
    <property type="term" value="C:cytoplasm"/>
    <property type="evidence" value="ECO:0000250"/>
    <property type="project" value="BHF-UCL"/>
</dbReference>
<dbReference type="GO" id="GO:0005789">
    <property type="term" value="C:endoplasmic reticulum membrane"/>
    <property type="evidence" value="ECO:0007669"/>
    <property type="project" value="UniProtKB-SubCell"/>
</dbReference>
<dbReference type="GO" id="GO:0000139">
    <property type="term" value="C:Golgi membrane"/>
    <property type="evidence" value="ECO:0007669"/>
    <property type="project" value="UniProtKB-SubCell"/>
</dbReference>
<dbReference type="GO" id="GO:0005634">
    <property type="term" value="C:nucleus"/>
    <property type="evidence" value="ECO:0000250"/>
    <property type="project" value="BHF-UCL"/>
</dbReference>
<dbReference type="GO" id="GO:0048471">
    <property type="term" value="C:perinuclear region of cytoplasm"/>
    <property type="evidence" value="ECO:0000250"/>
    <property type="project" value="BHF-UCL"/>
</dbReference>
<dbReference type="GO" id="GO:0030154">
    <property type="term" value="P:cell differentiation"/>
    <property type="evidence" value="ECO:0007669"/>
    <property type="project" value="UniProtKB-KW"/>
</dbReference>
<dbReference type="GO" id="GO:0000122">
    <property type="term" value="P:negative regulation of transcription by RNA polymerase II"/>
    <property type="evidence" value="ECO:0000250"/>
    <property type="project" value="BHF-UCL"/>
</dbReference>
<dbReference type="GO" id="GO:0045944">
    <property type="term" value="P:positive regulation of transcription by RNA polymerase II"/>
    <property type="evidence" value="ECO:0000250"/>
    <property type="project" value="BHF-UCL"/>
</dbReference>
<dbReference type="FunFam" id="2.60.40.10:FF:000431">
    <property type="entry name" value="motile sperm domain-containing protein 1"/>
    <property type="match status" value="1"/>
</dbReference>
<dbReference type="Gene3D" id="2.60.40.10">
    <property type="entry name" value="Immunoglobulins"/>
    <property type="match status" value="1"/>
</dbReference>
<dbReference type="InterPro" id="IPR013783">
    <property type="entry name" value="Ig-like_fold"/>
</dbReference>
<dbReference type="InterPro" id="IPR039283">
    <property type="entry name" value="MOSPD1/3"/>
</dbReference>
<dbReference type="InterPro" id="IPR000535">
    <property type="entry name" value="MSP_dom"/>
</dbReference>
<dbReference type="InterPro" id="IPR008962">
    <property type="entry name" value="PapD-like_sf"/>
</dbReference>
<dbReference type="PANTHER" id="PTHR34441">
    <property type="entry name" value="MOTILE SPERM DOMAIN-CONTAINING PROTEIN 1"/>
    <property type="match status" value="1"/>
</dbReference>
<dbReference type="PANTHER" id="PTHR34441:SF2">
    <property type="entry name" value="MOTILE SPERM DOMAIN-CONTAINING PROTEIN 1"/>
    <property type="match status" value="1"/>
</dbReference>
<dbReference type="Pfam" id="PF00635">
    <property type="entry name" value="Motile_Sperm"/>
    <property type="match status" value="1"/>
</dbReference>
<dbReference type="SUPFAM" id="SSF49354">
    <property type="entry name" value="PapD-like"/>
    <property type="match status" value="1"/>
</dbReference>
<dbReference type="PROSITE" id="PS50202">
    <property type="entry name" value="MSP"/>
    <property type="match status" value="1"/>
</dbReference>
<protein>
    <recommendedName>
        <fullName>Motile sperm domain-containing protein 1</fullName>
    </recommendedName>
</protein>
<keyword id="KW-0025">Alternative splicing</keyword>
<keyword id="KW-0221">Differentiation</keyword>
<keyword id="KW-0256">Endoplasmic reticulum</keyword>
<keyword id="KW-0333">Golgi apparatus</keyword>
<keyword id="KW-0472">Membrane</keyword>
<keyword id="KW-1267">Proteomics identification</keyword>
<keyword id="KW-1185">Reference proteome</keyword>
<keyword id="KW-0812">Transmembrane</keyword>
<keyword id="KW-1133">Transmembrane helix</keyword>
<feature type="chain" id="PRO_0000213459" description="Motile sperm domain-containing protein 1">
    <location>
        <begin position="1"/>
        <end position="213"/>
    </location>
</feature>
<feature type="transmembrane region" description="Helical" evidence="2">
    <location>
        <begin position="159"/>
        <end position="179"/>
    </location>
</feature>
<feature type="transmembrane region" description="Helical" evidence="2">
    <location>
        <begin position="191"/>
        <end position="211"/>
    </location>
</feature>
<feature type="domain" description="MSP" evidence="3">
    <location>
        <begin position="16"/>
        <end position="143"/>
    </location>
</feature>
<feature type="short sequence motif" description="Nuclear export signal" evidence="1">
    <location>
        <begin position="205"/>
        <end position="208"/>
    </location>
</feature>
<feature type="splice variant" id="VSP_014043" description="In isoform 3." evidence="6">
    <original>PE</original>
    <variation>PGK</variation>
    <location>
        <begin position="149"/>
        <end position="150"/>
    </location>
</feature>
<feature type="splice variant" id="VSP_014044" description="In isoform 2." evidence="6">
    <location>
        <begin position="150"/>
        <end position="203"/>
    </location>
</feature>
<feature type="sequence variant" id="VAR_036601" description="In a breast cancer sample; somatic mutation; dbSNP:rs2082899818." evidence="4">
    <original>V</original>
    <variation>I</variation>
    <location>
        <position position="63"/>
    </location>
</feature>
<name>MSPD1_HUMAN</name>
<accession>Q9UJG1</accession>
<accession>B2RE62</accession>
<accession>D3DTG5</accession>
<accession>Q5H9C5</accession>
<accession>Q5H9C7</accession>
<proteinExistence type="evidence at protein level"/>
<evidence type="ECO:0000250" key="1">
    <source>
        <dbReference type="UniProtKB" id="Q8VEL0"/>
    </source>
</evidence>
<evidence type="ECO:0000255" key="2"/>
<evidence type="ECO:0000255" key="3">
    <source>
        <dbReference type="PROSITE-ProRule" id="PRU00132"/>
    </source>
</evidence>
<evidence type="ECO:0000269" key="4">
    <source>
    </source>
</evidence>
<evidence type="ECO:0000269" key="5">
    <source>
    </source>
</evidence>
<evidence type="ECO:0000305" key="6"/>